<protein>
    <recommendedName>
        <fullName evidence="1">Large ribosomal subunit protein uL23</fullName>
    </recommendedName>
    <alternativeName>
        <fullName evidence="2">50S ribosomal protein L23</fullName>
    </alternativeName>
</protein>
<organism>
    <name type="scientific">Rickettsia rickettsii (strain Iowa)</name>
    <dbReference type="NCBI Taxonomy" id="452659"/>
    <lineage>
        <taxon>Bacteria</taxon>
        <taxon>Pseudomonadati</taxon>
        <taxon>Pseudomonadota</taxon>
        <taxon>Alphaproteobacteria</taxon>
        <taxon>Rickettsiales</taxon>
        <taxon>Rickettsiaceae</taxon>
        <taxon>Rickettsieae</taxon>
        <taxon>Rickettsia</taxon>
        <taxon>spotted fever group</taxon>
    </lineage>
</organism>
<evidence type="ECO:0000255" key="1">
    <source>
        <dbReference type="HAMAP-Rule" id="MF_01369"/>
    </source>
</evidence>
<evidence type="ECO:0000305" key="2"/>
<feature type="chain" id="PRO_1000087227" description="Large ribosomal subunit protein uL23">
    <location>
        <begin position="1"/>
        <end position="98"/>
    </location>
</feature>
<gene>
    <name evidence="1" type="primary">rplW</name>
    <name type="ordered locus">RrIowa_1195</name>
</gene>
<dbReference type="EMBL" id="CP000766">
    <property type="protein sequence ID" value="ABY72968.1"/>
    <property type="molecule type" value="Genomic_DNA"/>
</dbReference>
<dbReference type="RefSeq" id="WP_012151150.1">
    <property type="nucleotide sequence ID" value="NC_010263.3"/>
</dbReference>
<dbReference type="SMR" id="B0BUQ8"/>
<dbReference type="GeneID" id="79937668"/>
<dbReference type="KEGG" id="rrj:RrIowa_1195"/>
<dbReference type="eggNOG" id="COG0089">
    <property type="taxonomic scope" value="Bacteria"/>
</dbReference>
<dbReference type="HOGENOM" id="CLU_037562_3_2_5"/>
<dbReference type="Proteomes" id="UP000000796">
    <property type="component" value="Chromosome"/>
</dbReference>
<dbReference type="GO" id="GO:1990904">
    <property type="term" value="C:ribonucleoprotein complex"/>
    <property type="evidence" value="ECO:0007669"/>
    <property type="project" value="UniProtKB-KW"/>
</dbReference>
<dbReference type="GO" id="GO:0005840">
    <property type="term" value="C:ribosome"/>
    <property type="evidence" value="ECO:0007669"/>
    <property type="project" value="UniProtKB-KW"/>
</dbReference>
<dbReference type="GO" id="GO:0019843">
    <property type="term" value="F:rRNA binding"/>
    <property type="evidence" value="ECO:0007669"/>
    <property type="project" value="UniProtKB-UniRule"/>
</dbReference>
<dbReference type="GO" id="GO:0003735">
    <property type="term" value="F:structural constituent of ribosome"/>
    <property type="evidence" value="ECO:0007669"/>
    <property type="project" value="InterPro"/>
</dbReference>
<dbReference type="GO" id="GO:0006412">
    <property type="term" value="P:translation"/>
    <property type="evidence" value="ECO:0007669"/>
    <property type="project" value="UniProtKB-UniRule"/>
</dbReference>
<dbReference type="FunFam" id="3.30.70.330:FF:000001">
    <property type="entry name" value="50S ribosomal protein L23"/>
    <property type="match status" value="1"/>
</dbReference>
<dbReference type="Gene3D" id="3.30.70.330">
    <property type="match status" value="1"/>
</dbReference>
<dbReference type="HAMAP" id="MF_01369_B">
    <property type="entry name" value="Ribosomal_uL23_B"/>
    <property type="match status" value="1"/>
</dbReference>
<dbReference type="InterPro" id="IPR012677">
    <property type="entry name" value="Nucleotide-bd_a/b_plait_sf"/>
</dbReference>
<dbReference type="InterPro" id="IPR013025">
    <property type="entry name" value="Ribosomal_uL23-like"/>
</dbReference>
<dbReference type="InterPro" id="IPR012678">
    <property type="entry name" value="Ribosomal_uL23/eL15/eS24_sf"/>
</dbReference>
<dbReference type="NCBIfam" id="NF004359">
    <property type="entry name" value="PRK05738.1-3"/>
    <property type="match status" value="1"/>
</dbReference>
<dbReference type="NCBIfam" id="NF004363">
    <property type="entry name" value="PRK05738.2-4"/>
    <property type="match status" value="1"/>
</dbReference>
<dbReference type="PANTHER" id="PTHR11620">
    <property type="entry name" value="60S RIBOSOMAL PROTEIN L23A"/>
    <property type="match status" value="1"/>
</dbReference>
<dbReference type="Pfam" id="PF00276">
    <property type="entry name" value="Ribosomal_L23"/>
    <property type="match status" value="1"/>
</dbReference>
<dbReference type="SUPFAM" id="SSF54189">
    <property type="entry name" value="Ribosomal proteins S24e, L23 and L15e"/>
    <property type="match status" value="1"/>
</dbReference>
<keyword id="KW-0687">Ribonucleoprotein</keyword>
<keyword id="KW-0689">Ribosomal protein</keyword>
<keyword id="KW-0694">RNA-binding</keyword>
<keyword id="KW-0699">rRNA-binding</keyword>
<reference key="1">
    <citation type="journal article" date="2008" name="Infect. Immun.">
        <title>Genomic comparison of virulent Rickettsia rickettsii Sheila Smith and avirulent Rickettsia rickettsii Iowa.</title>
        <authorList>
            <person name="Ellison D.W."/>
            <person name="Clark T.R."/>
            <person name="Sturdevant D.E."/>
            <person name="Virtaneva K."/>
            <person name="Porcella S.F."/>
            <person name="Hackstadt T."/>
        </authorList>
    </citation>
    <scope>NUCLEOTIDE SEQUENCE [LARGE SCALE GENOMIC DNA]</scope>
    <source>
        <strain>Iowa</strain>
    </source>
</reference>
<accession>B0BUQ8</accession>
<proteinExistence type="inferred from homology"/>
<name>RL23_RICRO</name>
<comment type="function">
    <text evidence="1">One of the early assembly proteins it binds 23S rRNA. One of the proteins that surrounds the polypeptide exit tunnel on the outside of the ribosome. Forms the main docking site for trigger factor binding to the ribosome.</text>
</comment>
<comment type="subunit">
    <text evidence="1">Part of the 50S ribosomal subunit. Contacts protein L29, and trigger factor when it is bound to the ribosome.</text>
</comment>
<comment type="similarity">
    <text evidence="1">Belongs to the universal ribosomal protein uL23 family.</text>
</comment>
<sequence length="98" mass="11383">MSAYKYYDLIRKPIITEKTTTLSEQNKYAFYVDKFAEKLTLKKAIEEIFKVKVKKVNILNVKGKKKRFKGIIGTQINRKKAIVTLEKDHNIDFAGGIK</sequence>